<evidence type="ECO:0000255" key="1">
    <source>
        <dbReference type="HAMAP-Rule" id="MF_00440"/>
    </source>
</evidence>
<dbReference type="EMBL" id="CP001103">
    <property type="protein sequence ID" value="AEA97184.1"/>
    <property type="molecule type" value="Genomic_DNA"/>
</dbReference>
<dbReference type="EMBL" id="CP001103">
    <property type="protein sequence ID" value="AEA98627.1"/>
    <property type="molecule type" value="Genomic_DNA"/>
</dbReference>
<dbReference type="SMR" id="B4RV94"/>
<dbReference type="KEGG" id="amc:MADE_1012455"/>
<dbReference type="HOGENOM" id="CLU_108412_0_0_6"/>
<dbReference type="Proteomes" id="UP000001870">
    <property type="component" value="Chromosome"/>
</dbReference>
<dbReference type="GO" id="GO:0005524">
    <property type="term" value="F:ATP binding"/>
    <property type="evidence" value="ECO:0007669"/>
    <property type="project" value="UniProtKB-KW"/>
</dbReference>
<dbReference type="GO" id="GO:0003677">
    <property type="term" value="F:DNA binding"/>
    <property type="evidence" value="ECO:0007669"/>
    <property type="project" value="UniProtKB-KW"/>
</dbReference>
<dbReference type="GO" id="GO:0008270">
    <property type="term" value="F:zinc ion binding"/>
    <property type="evidence" value="ECO:0007669"/>
    <property type="project" value="UniProtKB-UniRule"/>
</dbReference>
<dbReference type="GO" id="GO:0045892">
    <property type="term" value="P:negative regulation of DNA-templated transcription"/>
    <property type="evidence" value="ECO:0007669"/>
    <property type="project" value="UniProtKB-UniRule"/>
</dbReference>
<dbReference type="HAMAP" id="MF_00440">
    <property type="entry name" value="NrdR"/>
    <property type="match status" value="1"/>
</dbReference>
<dbReference type="InterPro" id="IPR005144">
    <property type="entry name" value="ATP-cone_dom"/>
</dbReference>
<dbReference type="InterPro" id="IPR055173">
    <property type="entry name" value="NrdR-like_N"/>
</dbReference>
<dbReference type="InterPro" id="IPR003796">
    <property type="entry name" value="RNR_NrdR-like"/>
</dbReference>
<dbReference type="NCBIfam" id="TIGR00244">
    <property type="entry name" value="transcriptional regulator NrdR"/>
    <property type="match status" value="1"/>
</dbReference>
<dbReference type="PANTHER" id="PTHR30455">
    <property type="entry name" value="TRANSCRIPTIONAL REPRESSOR NRDR"/>
    <property type="match status" value="1"/>
</dbReference>
<dbReference type="PANTHER" id="PTHR30455:SF2">
    <property type="entry name" value="TRANSCRIPTIONAL REPRESSOR NRDR"/>
    <property type="match status" value="1"/>
</dbReference>
<dbReference type="Pfam" id="PF03477">
    <property type="entry name" value="ATP-cone"/>
    <property type="match status" value="1"/>
</dbReference>
<dbReference type="Pfam" id="PF22811">
    <property type="entry name" value="Zn_ribbon_NrdR"/>
    <property type="match status" value="1"/>
</dbReference>
<dbReference type="PROSITE" id="PS51161">
    <property type="entry name" value="ATP_CONE"/>
    <property type="match status" value="1"/>
</dbReference>
<feature type="chain" id="PRO_1000124463" description="Transcriptional repressor NrdR">
    <location>
        <begin position="1"/>
        <end position="149"/>
    </location>
</feature>
<feature type="domain" description="ATP-cone" evidence="1">
    <location>
        <begin position="49"/>
        <end position="139"/>
    </location>
</feature>
<feature type="zinc finger region" evidence="1">
    <location>
        <begin position="3"/>
        <end position="34"/>
    </location>
</feature>
<comment type="function">
    <text evidence="1">Negatively regulates transcription of bacterial ribonucleotide reductase nrd genes and operons by binding to NrdR-boxes.</text>
</comment>
<comment type="cofactor">
    <cofactor evidence="1">
        <name>Zn(2+)</name>
        <dbReference type="ChEBI" id="CHEBI:29105"/>
    </cofactor>
    <text evidence="1">Binds 1 zinc ion.</text>
</comment>
<comment type="similarity">
    <text evidence="1">Belongs to the NrdR family.</text>
</comment>
<name>NRDR_ALTMD</name>
<reference key="1">
    <citation type="journal article" date="2008" name="ISME J.">
        <title>Comparative genomics of two ecotypes of the marine planktonic copiotroph Alteromonas macleodii suggests alternative lifestyles associated with different kinds of particulate organic matter.</title>
        <authorList>
            <person name="Ivars-Martinez E."/>
            <person name="Martin-Cuadrado A.-B."/>
            <person name="D'Auria G."/>
            <person name="Mira A."/>
            <person name="Ferriera S."/>
            <person name="Johnson J."/>
            <person name="Friedman R."/>
            <person name="Rodriguez-Valera F."/>
        </authorList>
    </citation>
    <scope>NUCLEOTIDE SEQUENCE [LARGE SCALE GENOMIC DNA]</scope>
    <source>
        <strain>DSM 17117 / CIP 110805 / LMG 28347 / Deep ecotype</strain>
    </source>
</reference>
<accession>B4RV94</accession>
<accession>F2G250</accession>
<sequence>MFCPFCSEQETKVIDSRLVAEGQQVRRRRECMVCHERFTTFESAELVMPRVIKRDGSREPFNEDKLRAGLQRALEKRPVSTEKVEQCILSLKSQLRATGEREVSSELLGNLIMKALKELDKVAYVRFASVYRSFEDIREFGEEIARLGD</sequence>
<protein>
    <recommendedName>
        <fullName evidence="1">Transcriptional repressor NrdR</fullName>
    </recommendedName>
</protein>
<organism>
    <name type="scientific">Alteromonas mediterranea (strain DSM 17117 / CIP 110805 / LMG 28347 / Deep ecotype)</name>
    <dbReference type="NCBI Taxonomy" id="1774373"/>
    <lineage>
        <taxon>Bacteria</taxon>
        <taxon>Pseudomonadati</taxon>
        <taxon>Pseudomonadota</taxon>
        <taxon>Gammaproteobacteria</taxon>
        <taxon>Alteromonadales</taxon>
        <taxon>Alteromonadaceae</taxon>
        <taxon>Alteromonas/Salinimonas group</taxon>
        <taxon>Alteromonas</taxon>
    </lineage>
</organism>
<gene>
    <name evidence="1" type="primary">nrdR1</name>
    <name type="ordered locus">MADE_1005190</name>
</gene>
<gene>
    <name evidence="1" type="primary">nrdR2</name>
    <name type="ordered locus">MADE_1012455</name>
</gene>
<keyword id="KW-0067">ATP-binding</keyword>
<keyword id="KW-0238">DNA-binding</keyword>
<keyword id="KW-0479">Metal-binding</keyword>
<keyword id="KW-0547">Nucleotide-binding</keyword>
<keyword id="KW-0678">Repressor</keyword>
<keyword id="KW-0804">Transcription</keyword>
<keyword id="KW-0805">Transcription regulation</keyword>
<keyword id="KW-0862">Zinc</keyword>
<keyword id="KW-0863">Zinc-finger</keyword>
<proteinExistence type="inferred from homology"/>